<sequence length="282" mass="31816">MAGAGLIGIRRRIKSVTNIRKITKAMGLVSTAKLRKARVNLEINKKYYNEYKIILKDIINFIEDSNIYIDGNGSHKKLYVIFTSDSGLCGSFNINIINNVINEIKEDKENSLVIVIGQKGRMYLKKLGINTLAEYIEIPDVPTTKEARTIAKNIIKLYSSKEVGEVFLVYSEFYSPVKQQVLINKILPFTKENKSDNKYIEFNPPVTQLMDEILENYLKATILNCFSNSKASENGSRMTAMNGATDNANDLLDNLDLQFNRLRQSAITQEISEIVGGAEAQR</sequence>
<reference key="1">
    <citation type="submission" date="2008-10" db="EMBL/GenBank/DDBJ databases">
        <title>Genome sequence of Clostridium botulinum A2 Kyoto.</title>
        <authorList>
            <person name="Shrivastava S."/>
            <person name="Brinkac L.M."/>
            <person name="Brown J.L."/>
            <person name="Bruce D."/>
            <person name="Detter C.C."/>
            <person name="Johnson E.A."/>
            <person name="Munk C.A."/>
            <person name="Smith L.A."/>
            <person name="Smith T.J."/>
            <person name="Sutton G."/>
            <person name="Brettin T.S."/>
        </authorList>
    </citation>
    <scope>NUCLEOTIDE SEQUENCE [LARGE SCALE GENOMIC DNA]</scope>
    <source>
        <strain>Kyoto / Type A2</strain>
    </source>
</reference>
<organism>
    <name type="scientific">Clostridium botulinum (strain Kyoto / Type A2)</name>
    <dbReference type="NCBI Taxonomy" id="536232"/>
    <lineage>
        <taxon>Bacteria</taxon>
        <taxon>Bacillati</taxon>
        <taxon>Bacillota</taxon>
        <taxon>Clostridia</taxon>
        <taxon>Eubacteriales</taxon>
        <taxon>Clostridiaceae</taxon>
        <taxon>Clostridium</taxon>
    </lineage>
</organism>
<keyword id="KW-0066">ATP synthesis</keyword>
<keyword id="KW-1003">Cell membrane</keyword>
<keyword id="KW-0139">CF(1)</keyword>
<keyword id="KW-0375">Hydrogen ion transport</keyword>
<keyword id="KW-0406">Ion transport</keyword>
<keyword id="KW-0472">Membrane</keyword>
<keyword id="KW-0813">Transport</keyword>
<accession>C1FQP4</accession>
<name>ATPG_CLOBJ</name>
<feature type="chain" id="PRO_1000148611" description="ATP synthase gamma chain">
    <location>
        <begin position="1"/>
        <end position="282"/>
    </location>
</feature>
<proteinExistence type="inferred from homology"/>
<gene>
    <name evidence="1" type="primary">atpG</name>
    <name type="ordered locus">CLM_0199</name>
</gene>
<evidence type="ECO:0000255" key="1">
    <source>
        <dbReference type="HAMAP-Rule" id="MF_00815"/>
    </source>
</evidence>
<protein>
    <recommendedName>
        <fullName evidence="1">ATP synthase gamma chain</fullName>
    </recommendedName>
    <alternativeName>
        <fullName evidence="1">ATP synthase F1 sector gamma subunit</fullName>
    </alternativeName>
    <alternativeName>
        <fullName evidence="1">F-ATPase gamma subunit</fullName>
    </alternativeName>
</protein>
<dbReference type="EMBL" id="CP001581">
    <property type="protein sequence ID" value="ACO86220.1"/>
    <property type="molecule type" value="Genomic_DNA"/>
</dbReference>
<dbReference type="RefSeq" id="WP_003356684.1">
    <property type="nucleotide sequence ID" value="NC_012563.1"/>
</dbReference>
<dbReference type="SMR" id="C1FQP4"/>
<dbReference type="KEGG" id="cby:CLM_0199"/>
<dbReference type="eggNOG" id="COG0224">
    <property type="taxonomic scope" value="Bacteria"/>
</dbReference>
<dbReference type="HOGENOM" id="CLU_050669_0_1_9"/>
<dbReference type="Proteomes" id="UP000001374">
    <property type="component" value="Chromosome"/>
</dbReference>
<dbReference type="GO" id="GO:0005886">
    <property type="term" value="C:plasma membrane"/>
    <property type="evidence" value="ECO:0007669"/>
    <property type="project" value="UniProtKB-SubCell"/>
</dbReference>
<dbReference type="GO" id="GO:0045259">
    <property type="term" value="C:proton-transporting ATP synthase complex"/>
    <property type="evidence" value="ECO:0007669"/>
    <property type="project" value="UniProtKB-KW"/>
</dbReference>
<dbReference type="GO" id="GO:0005524">
    <property type="term" value="F:ATP binding"/>
    <property type="evidence" value="ECO:0007669"/>
    <property type="project" value="UniProtKB-UniRule"/>
</dbReference>
<dbReference type="GO" id="GO:0046933">
    <property type="term" value="F:proton-transporting ATP synthase activity, rotational mechanism"/>
    <property type="evidence" value="ECO:0007669"/>
    <property type="project" value="UniProtKB-UniRule"/>
</dbReference>
<dbReference type="GO" id="GO:0042777">
    <property type="term" value="P:proton motive force-driven plasma membrane ATP synthesis"/>
    <property type="evidence" value="ECO:0007669"/>
    <property type="project" value="UniProtKB-UniRule"/>
</dbReference>
<dbReference type="CDD" id="cd12151">
    <property type="entry name" value="F1-ATPase_gamma"/>
    <property type="match status" value="1"/>
</dbReference>
<dbReference type="FunFam" id="3.40.1380.10:FF:000012">
    <property type="entry name" value="ATP synthase gamma chain"/>
    <property type="match status" value="1"/>
</dbReference>
<dbReference type="Gene3D" id="3.40.1380.10">
    <property type="match status" value="1"/>
</dbReference>
<dbReference type="Gene3D" id="1.10.287.80">
    <property type="entry name" value="ATP synthase, gamma subunit, helix hairpin domain"/>
    <property type="match status" value="1"/>
</dbReference>
<dbReference type="HAMAP" id="MF_00815">
    <property type="entry name" value="ATP_synth_gamma_bact"/>
    <property type="match status" value="1"/>
</dbReference>
<dbReference type="InterPro" id="IPR035968">
    <property type="entry name" value="ATP_synth_F1_ATPase_gsu"/>
</dbReference>
<dbReference type="InterPro" id="IPR000131">
    <property type="entry name" value="ATP_synth_F1_gsu"/>
</dbReference>
<dbReference type="InterPro" id="IPR023632">
    <property type="entry name" value="ATP_synth_F1_gsu_CS"/>
</dbReference>
<dbReference type="NCBIfam" id="TIGR01146">
    <property type="entry name" value="ATPsyn_F1gamma"/>
    <property type="match status" value="1"/>
</dbReference>
<dbReference type="PANTHER" id="PTHR11693">
    <property type="entry name" value="ATP SYNTHASE GAMMA CHAIN"/>
    <property type="match status" value="1"/>
</dbReference>
<dbReference type="PANTHER" id="PTHR11693:SF22">
    <property type="entry name" value="ATP SYNTHASE SUBUNIT GAMMA, MITOCHONDRIAL"/>
    <property type="match status" value="1"/>
</dbReference>
<dbReference type="Pfam" id="PF00231">
    <property type="entry name" value="ATP-synt"/>
    <property type="match status" value="1"/>
</dbReference>
<dbReference type="PRINTS" id="PR00126">
    <property type="entry name" value="ATPASEGAMMA"/>
</dbReference>
<dbReference type="SUPFAM" id="SSF52943">
    <property type="entry name" value="ATP synthase (F1-ATPase), gamma subunit"/>
    <property type="match status" value="1"/>
</dbReference>
<dbReference type="PROSITE" id="PS00153">
    <property type="entry name" value="ATPASE_GAMMA"/>
    <property type="match status" value="1"/>
</dbReference>
<comment type="function">
    <text evidence="1">Produces ATP from ADP in the presence of a proton gradient across the membrane. The gamma chain is believed to be important in regulating ATPase activity and the flow of protons through the CF(0) complex.</text>
</comment>
<comment type="subunit">
    <text evidence="1">F-type ATPases have 2 components, CF(1) - the catalytic core - and CF(0) - the membrane proton channel. CF(1) has five subunits: alpha(3), beta(3), gamma(1), delta(1), epsilon(1). CF(0) has three main subunits: a, b and c.</text>
</comment>
<comment type="subcellular location">
    <subcellularLocation>
        <location evidence="1">Cell membrane</location>
        <topology evidence="1">Peripheral membrane protein</topology>
    </subcellularLocation>
</comment>
<comment type="similarity">
    <text evidence="1">Belongs to the ATPase gamma chain family.</text>
</comment>